<organism>
    <name type="scientific">Listeria monocytogenes serotype 4a (strain HCC23)</name>
    <dbReference type="NCBI Taxonomy" id="552536"/>
    <lineage>
        <taxon>Bacteria</taxon>
        <taxon>Bacillati</taxon>
        <taxon>Bacillota</taxon>
        <taxon>Bacilli</taxon>
        <taxon>Bacillales</taxon>
        <taxon>Listeriaceae</taxon>
        <taxon>Listeria</taxon>
    </lineage>
</organism>
<accession>B8DDP3</accession>
<name>MSRB_LISMH</name>
<dbReference type="EC" id="1.8.4.12" evidence="1"/>
<dbReference type="EMBL" id="CP001175">
    <property type="protein sequence ID" value="ACK39052.1"/>
    <property type="molecule type" value="Genomic_DNA"/>
</dbReference>
<dbReference type="RefSeq" id="WP_012581101.1">
    <property type="nucleotide sequence ID" value="NC_011660.1"/>
</dbReference>
<dbReference type="SMR" id="B8DDP3"/>
<dbReference type="KEGG" id="lmh:LMHCC_0697"/>
<dbReference type="HOGENOM" id="CLU_031040_8_5_9"/>
<dbReference type="GO" id="GO:0005737">
    <property type="term" value="C:cytoplasm"/>
    <property type="evidence" value="ECO:0007669"/>
    <property type="project" value="TreeGrafter"/>
</dbReference>
<dbReference type="GO" id="GO:0033743">
    <property type="term" value="F:peptide-methionine (R)-S-oxide reductase activity"/>
    <property type="evidence" value="ECO:0007669"/>
    <property type="project" value="UniProtKB-UniRule"/>
</dbReference>
<dbReference type="GO" id="GO:0030091">
    <property type="term" value="P:protein repair"/>
    <property type="evidence" value="ECO:0007669"/>
    <property type="project" value="InterPro"/>
</dbReference>
<dbReference type="GO" id="GO:0006979">
    <property type="term" value="P:response to oxidative stress"/>
    <property type="evidence" value="ECO:0007669"/>
    <property type="project" value="InterPro"/>
</dbReference>
<dbReference type="FunFam" id="2.170.150.20:FF:000003">
    <property type="entry name" value="Peptide methionine sulfoxide reductase MsrB"/>
    <property type="match status" value="1"/>
</dbReference>
<dbReference type="Gene3D" id="2.170.150.20">
    <property type="entry name" value="Peptide methionine sulfoxide reductase"/>
    <property type="match status" value="1"/>
</dbReference>
<dbReference type="HAMAP" id="MF_01400">
    <property type="entry name" value="MsrB"/>
    <property type="match status" value="1"/>
</dbReference>
<dbReference type="InterPro" id="IPR028427">
    <property type="entry name" value="Met_Sox_Rdtase_MsrB"/>
</dbReference>
<dbReference type="InterPro" id="IPR002579">
    <property type="entry name" value="Met_Sox_Rdtase_MsrB_dom"/>
</dbReference>
<dbReference type="InterPro" id="IPR011057">
    <property type="entry name" value="Mss4-like_sf"/>
</dbReference>
<dbReference type="NCBIfam" id="TIGR00357">
    <property type="entry name" value="peptide-methionine (R)-S-oxide reductase MsrB"/>
    <property type="match status" value="1"/>
</dbReference>
<dbReference type="PANTHER" id="PTHR10173">
    <property type="entry name" value="METHIONINE SULFOXIDE REDUCTASE"/>
    <property type="match status" value="1"/>
</dbReference>
<dbReference type="PANTHER" id="PTHR10173:SF59">
    <property type="entry name" value="PEPTIDE METHIONINE SULFOXIDE REDUCTASE MSRA_MSRB"/>
    <property type="match status" value="1"/>
</dbReference>
<dbReference type="Pfam" id="PF01641">
    <property type="entry name" value="SelR"/>
    <property type="match status" value="1"/>
</dbReference>
<dbReference type="SUPFAM" id="SSF51316">
    <property type="entry name" value="Mss4-like"/>
    <property type="match status" value="1"/>
</dbReference>
<dbReference type="PROSITE" id="PS51790">
    <property type="entry name" value="MSRB"/>
    <property type="match status" value="1"/>
</dbReference>
<comment type="catalytic activity">
    <reaction evidence="1">
        <text>L-methionyl-[protein] + [thioredoxin]-disulfide + H2O = L-methionyl-(R)-S-oxide-[protein] + [thioredoxin]-dithiol</text>
        <dbReference type="Rhea" id="RHEA:24164"/>
        <dbReference type="Rhea" id="RHEA-COMP:10698"/>
        <dbReference type="Rhea" id="RHEA-COMP:10700"/>
        <dbReference type="Rhea" id="RHEA-COMP:12313"/>
        <dbReference type="Rhea" id="RHEA-COMP:12314"/>
        <dbReference type="ChEBI" id="CHEBI:15377"/>
        <dbReference type="ChEBI" id="CHEBI:16044"/>
        <dbReference type="ChEBI" id="CHEBI:29950"/>
        <dbReference type="ChEBI" id="CHEBI:45764"/>
        <dbReference type="ChEBI" id="CHEBI:50058"/>
        <dbReference type="EC" id="1.8.4.12"/>
    </reaction>
</comment>
<comment type="similarity">
    <text evidence="1">Belongs to the MsrB Met sulfoxide reductase family.</text>
</comment>
<reference key="1">
    <citation type="journal article" date="2011" name="J. Bacteriol.">
        <title>Genome sequence of lineage III Listeria monocytogenes strain HCC23.</title>
        <authorList>
            <person name="Steele C.L."/>
            <person name="Donaldson J.R."/>
            <person name="Paul D."/>
            <person name="Banes M.M."/>
            <person name="Arick T."/>
            <person name="Bridges S.M."/>
            <person name="Lawrence M.L."/>
        </authorList>
    </citation>
    <scope>NUCLEOTIDE SEQUENCE [LARGE SCALE GENOMIC DNA]</scope>
    <source>
        <strain>HCC23</strain>
    </source>
</reference>
<protein>
    <recommendedName>
        <fullName evidence="1">Peptide methionine sulfoxide reductase MsrB</fullName>
        <ecNumber evidence="1">1.8.4.12</ecNumber>
    </recommendedName>
    <alternativeName>
        <fullName evidence="1">Peptide-methionine (R)-S-oxide reductase</fullName>
    </alternativeName>
</protein>
<evidence type="ECO:0000255" key="1">
    <source>
        <dbReference type="HAMAP-Rule" id="MF_01400"/>
    </source>
</evidence>
<evidence type="ECO:0000255" key="2">
    <source>
        <dbReference type="PROSITE-ProRule" id="PRU01126"/>
    </source>
</evidence>
<keyword id="KW-0560">Oxidoreductase</keyword>
<proteinExistence type="inferred from homology"/>
<sequence>MDESKKNERLQQLTDIQYNVTQKAGTERPFQNEFYDNVAKGIYVDIVSGKPLFSSNDQYDAGCGWPSFTKPIDEAEVIEHRDLTHGMIRTEVKSADADSHLGHVFPDGPQDKGGLRYCINSAALRFIPVDKLEEEGYQAYKKIFE</sequence>
<feature type="chain" id="PRO_1000184552" description="Peptide methionine sulfoxide reductase MsrB">
    <location>
        <begin position="1"/>
        <end position="145"/>
    </location>
</feature>
<feature type="domain" description="MsrB" evidence="2">
    <location>
        <begin position="6"/>
        <end position="129"/>
    </location>
</feature>
<feature type="active site" description="Nucleophile" evidence="2">
    <location>
        <position position="118"/>
    </location>
</feature>
<gene>
    <name evidence="1" type="primary">msrB</name>
    <name type="ordered locus">LMHCC_0697</name>
</gene>